<organism>
    <name type="scientific">Fusarium pseudograminearum (strain CS3096)</name>
    <name type="common">Wheat and barley crown-rot fungus</name>
    <dbReference type="NCBI Taxonomy" id="1028729"/>
    <lineage>
        <taxon>Eukaryota</taxon>
        <taxon>Fungi</taxon>
        <taxon>Dikarya</taxon>
        <taxon>Ascomycota</taxon>
        <taxon>Pezizomycotina</taxon>
        <taxon>Sordariomycetes</taxon>
        <taxon>Hypocreomycetidae</taxon>
        <taxon>Hypocreales</taxon>
        <taxon>Nectriaceae</taxon>
        <taxon>Fusarium</taxon>
    </lineage>
</organism>
<keyword id="KW-0325">Glycoprotein</keyword>
<keyword id="KW-0472">Membrane</keyword>
<keyword id="KW-1185">Reference proteome</keyword>
<keyword id="KW-0812">Transmembrane</keyword>
<keyword id="KW-1133">Transmembrane helix</keyword>
<keyword id="KW-0813">Transport</keyword>
<dbReference type="EMBL" id="AFNW01000283">
    <property type="protein sequence ID" value="EKJ71681.1"/>
    <property type="molecule type" value="Genomic_DNA"/>
</dbReference>
<dbReference type="RefSeq" id="XP_009259520.1">
    <property type="nucleotide sequence ID" value="XM_009261245.1"/>
</dbReference>
<dbReference type="SMR" id="K3UII4"/>
<dbReference type="EnsemblFungi" id="EKJ71681">
    <property type="protein sequence ID" value="EKJ71681"/>
    <property type="gene ID" value="FPSE_08127"/>
</dbReference>
<dbReference type="GeneID" id="20366745"/>
<dbReference type="KEGG" id="fpu:FPSE_08127"/>
<dbReference type="eggNOG" id="ENOG502SHQ6">
    <property type="taxonomic scope" value="Eukaryota"/>
</dbReference>
<dbReference type="HOGENOM" id="CLU_027816_3_1_1"/>
<dbReference type="OrthoDB" id="40134at2759"/>
<dbReference type="Proteomes" id="UP000007978">
    <property type="component" value="Chromosome 2"/>
</dbReference>
<dbReference type="GO" id="GO:0016020">
    <property type="term" value="C:membrane"/>
    <property type="evidence" value="ECO:0007669"/>
    <property type="project" value="UniProtKB-SubCell"/>
</dbReference>
<dbReference type="GO" id="GO:0015179">
    <property type="term" value="F:L-amino acid transmembrane transporter activity"/>
    <property type="evidence" value="ECO:0007669"/>
    <property type="project" value="TreeGrafter"/>
</dbReference>
<dbReference type="InterPro" id="IPR013057">
    <property type="entry name" value="AA_transpt_TM"/>
</dbReference>
<dbReference type="PANTHER" id="PTHR22950">
    <property type="entry name" value="AMINO ACID TRANSPORTER"/>
    <property type="match status" value="1"/>
</dbReference>
<dbReference type="PANTHER" id="PTHR22950:SF697">
    <property type="entry name" value="AMINO ACID TRANSPORTER (EUROFUNG)"/>
    <property type="match status" value="1"/>
</dbReference>
<dbReference type="Pfam" id="PF01490">
    <property type="entry name" value="Aa_trans"/>
    <property type="match status" value="1"/>
</dbReference>
<proteinExistence type="evidence at transcript level"/>
<protein>
    <recommendedName>
        <fullName evidence="6">Transmembrane transporter FPSE_08127</fullName>
    </recommendedName>
    <alternativeName>
        <fullName evidence="6">Fusarium detoxification of benzoxazolinone cluster protein FPSE_08127</fullName>
        <shortName evidence="6">FDB cluster protein FPSE_08127</shortName>
    </alternativeName>
</protein>
<name>FDB27_FUSPC</name>
<accession>K3UII4</accession>
<feature type="chain" id="PRO_0000454607" description="Transmembrane transporter FPSE_08127">
    <location>
        <begin position="1"/>
        <end position="476"/>
    </location>
</feature>
<feature type="transmembrane region" description="Helical" evidence="2">
    <location>
        <begin position="72"/>
        <end position="92"/>
    </location>
</feature>
<feature type="transmembrane region" description="Helical" evidence="2">
    <location>
        <begin position="133"/>
        <end position="153"/>
    </location>
</feature>
<feature type="transmembrane region" description="Helical" evidence="2">
    <location>
        <begin position="164"/>
        <end position="184"/>
    </location>
</feature>
<feature type="transmembrane region" description="Helical" evidence="2">
    <location>
        <begin position="192"/>
        <end position="212"/>
    </location>
</feature>
<feature type="transmembrane region" description="Helical" evidence="2">
    <location>
        <begin position="231"/>
        <end position="251"/>
    </location>
</feature>
<feature type="transmembrane region" description="Helical" evidence="2">
    <location>
        <begin position="275"/>
        <end position="295"/>
    </location>
</feature>
<feature type="transmembrane region" description="Helical" evidence="2">
    <location>
        <begin position="317"/>
        <end position="337"/>
    </location>
</feature>
<feature type="transmembrane region" description="Helical" evidence="2">
    <location>
        <begin position="364"/>
        <end position="384"/>
    </location>
</feature>
<feature type="transmembrane region" description="Helical" evidence="2">
    <location>
        <begin position="387"/>
        <end position="407"/>
    </location>
</feature>
<feature type="transmembrane region" description="Helical" evidence="2">
    <location>
        <begin position="431"/>
        <end position="451"/>
    </location>
</feature>
<feature type="glycosylation site" description="N-linked (GlcNAc...) asparagine" evidence="3">
    <location>
        <position position="111"/>
    </location>
</feature>
<evidence type="ECO:0000250" key="1">
    <source>
        <dbReference type="UniProtKB" id="W7MLD5"/>
    </source>
</evidence>
<evidence type="ECO:0000255" key="2"/>
<evidence type="ECO:0000255" key="3">
    <source>
        <dbReference type="PROSITE-ProRule" id="PRU00498"/>
    </source>
</evidence>
<evidence type="ECO:0000269" key="4">
    <source>
    </source>
</evidence>
<evidence type="ECO:0000269" key="5">
    <source>
    </source>
</evidence>
<evidence type="ECO:0000303" key="6">
    <source>
    </source>
</evidence>
<evidence type="ECO:0000305" key="7"/>
<evidence type="ECO:0000305" key="8">
    <source>
    </source>
</evidence>
<sequence length="476" mass="51198">MASPTASSILQYSGTGQKEKGTLDHGDVPSVDIGKGETKEVFQENVDGVEFRTVSWQRATVVFLKINFAMSILAIPAALGALGSIGGSLCIIGYTSLNVYTGLILGDIKHNHTECHTLADMMGLIWGRWGRELVGVQIIIAQTLVTAGGVVAITIGFNALSDHGTCTVAFGLISAIAVTAFSAIRTFSKLGWLTWIGFITFVIGVFIFVVAVTQVDRPAAAPQTGDFDLGWAPIAYPSFVVGMVSVTNIFISTCGSSNFIPVISEMKRPQDYRKACLVAGFIVGAMYLSFSLVIYRYCGVWLSTPAFASAGPIVKKVAYGVSLPGLILGVGIYQHVAAKYAFVRVLRDSKHLQANTFTHWGTWLGINIALGTAAFIVAEAVPILNYLLGLAGAICLAPFSLIFPALLWMHEFKKYKTGTTTQKVKYSFHVLIMMFGFFMMIAGFYSVVVLIKEAFDTGTIAKVFDCADNSGFVQGK</sequence>
<gene>
    <name type="ORF">FPSE_08127</name>
</gene>
<reference key="1">
    <citation type="journal article" date="2012" name="PLoS Pathog.">
        <title>Comparative pathogenomics reveals horizontally acquired novel virulence genes in fungi infecting cereal hosts.</title>
        <authorList>
            <person name="Gardiner D.M."/>
            <person name="McDonald M.C."/>
            <person name="Covarelli L."/>
            <person name="Solomon P.S."/>
            <person name="Rusu A.G."/>
            <person name="Marshall M."/>
            <person name="Kazan K."/>
            <person name="Chakraborty S."/>
            <person name="McDonald B.A."/>
            <person name="Manners J.M."/>
        </authorList>
    </citation>
    <scope>NUCLEOTIDE SEQUENCE [LARGE SCALE GENOMIC DNA]</scope>
    <source>
        <strain>CS3096</strain>
    </source>
</reference>
<reference key="2">
    <citation type="journal article" date="2015" name="Mol. Plant Pathol.">
        <title>Degradation of the benzoxazolinone class of phytoalexins is important for virulence of Fusarium pseudograminearum towards wheat.</title>
        <authorList>
            <person name="Kettle A.J."/>
            <person name="Batley J."/>
            <person name="Benfield A.H."/>
            <person name="Manners J.M."/>
            <person name="Kazan K."/>
            <person name="Gardiner D.M."/>
        </authorList>
    </citation>
    <scope>FUNCTION</scope>
    <scope>INDUCTION</scope>
</reference>
<reference key="3">
    <citation type="journal article" date="2016" name="Fungal Genet. Biol.">
        <title>The Fdb3 transcription factor of the Fusarium Detoxification of Benzoxazolinone gene cluster is required for MBOA but not BOA degradation in Fusarium pseudograminearum.</title>
        <authorList>
            <person name="Kettle A.J."/>
            <person name="Carere J."/>
            <person name="Batley J."/>
            <person name="Manners J.M."/>
            <person name="Kazan K."/>
            <person name="Gardiner D.M."/>
        </authorList>
    </citation>
    <scope>FUNCTION</scope>
    <scope>INDUCTION</scope>
    <scope>DISRUPTION PHENOTYPE</scope>
</reference>
<comment type="function">
    <text evidence="1 4 5 8">Transmembrane transporter; part of the Fusarium detoxification of benzoxazolinone cluster involved in the degradation of benzoxazolinones produced by the host plant (PubMed:25727347, PubMed:26828593). Maize, wheat, and rye produce the 2 benzoxazinone phytoanticipins 2,4-dihy-droxy-7-methoxy-1,4-benzoxazin-3-one (DIMBOA) and 2,4-dihydroxy-1,4-benzoxazin-3-one (DIBOA) that, due to their inherent instability once released, spontaneously degrade to the more stable corresponding benzoxazolinones, 6-methoxy-2-benzoxazolinone (MBOA) and 2-benzoxazolinone (BOA), respectively (By similarity). FPSE_08127 is proposed to shuttle metabolites of benzoxazolinone degradation (Probable).</text>
</comment>
<comment type="subcellular location">
    <subcellularLocation>
        <location evidence="2">Membrane</location>
        <topology evidence="2">Multi-pass membrane protein</topology>
    </subcellularLocation>
</comment>
<comment type="induction">
    <text evidence="4 5">Expression is induced in response to 2-benzoxasolinone (BOA) exposure (PubMed:25727347). Expression is also induced in response to 6-methoxy-2-benzoxazolinone (MBOA) and 2-aminophenol (2-AP) treatment (PubMed:26828593).</text>
</comment>
<comment type="disruption phenotype">
    <text evidence="5">Shows significantly reduced growth but does not affect tolerance to benzoxazolinone.</text>
</comment>
<comment type="similarity">
    <text evidence="7">Belongs to the amino acid/polyamine transporter 2 family.</text>
</comment>